<name>RS7_COLP3</name>
<feature type="chain" id="PRO_0000226493" description="Small ribosomal subunit protein uS7">
    <location>
        <begin position="1"/>
        <end position="156"/>
    </location>
</feature>
<accession>Q47UW2</accession>
<dbReference type="EMBL" id="CP000083">
    <property type="protein sequence ID" value="AAZ28103.1"/>
    <property type="molecule type" value="Genomic_DNA"/>
</dbReference>
<dbReference type="RefSeq" id="WP_011045491.1">
    <property type="nucleotide sequence ID" value="NC_003910.7"/>
</dbReference>
<dbReference type="SMR" id="Q47UW2"/>
<dbReference type="STRING" id="167879.CPS_4766"/>
<dbReference type="KEGG" id="cps:CPS_4766"/>
<dbReference type="eggNOG" id="COG0049">
    <property type="taxonomic scope" value="Bacteria"/>
</dbReference>
<dbReference type="HOGENOM" id="CLU_072226_1_1_6"/>
<dbReference type="Proteomes" id="UP000000547">
    <property type="component" value="Chromosome"/>
</dbReference>
<dbReference type="GO" id="GO:0015935">
    <property type="term" value="C:small ribosomal subunit"/>
    <property type="evidence" value="ECO:0007669"/>
    <property type="project" value="InterPro"/>
</dbReference>
<dbReference type="GO" id="GO:0019843">
    <property type="term" value="F:rRNA binding"/>
    <property type="evidence" value="ECO:0007669"/>
    <property type="project" value="UniProtKB-UniRule"/>
</dbReference>
<dbReference type="GO" id="GO:0003735">
    <property type="term" value="F:structural constituent of ribosome"/>
    <property type="evidence" value="ECO:0007669"/>
    <property type="project" value="InterPro"/>
</dbReference>
<dbReference type="GO" id="GO:0000049">
    <property type="term" value="F:tRNA binding"/>
    <property type="evidence" value="ECO:0007669"/>
    <property type="project" value="UniProtKB-UniRule"/>
</dbReference>
<dbReference type="GO" id="GO:0006412">
    <property type="term" value="P:translation"/>
    <property type="evidence" value="ECO:0007669"/>
    <property type="project" value="UniProtKB-UniRule"/>
</dbReference>
<dbReference type="CDD" id="cd14869">
    <property type="entry name" value="uS7_Bacteria"/>
    <property type="match status" value="1"/>
</dbReference>
<dbReference type="FunFam" id="1.10.455.10:FF:000001">
    <property type="entry name" value="30S ribosomal protein S7"/>
    <property type="match status" value="1"/>
</dbReference>
<dbReference type="Gene3D" id="1.10.455.10">
    <property type="entry name" value="Ribosomal protein S7 domain"/>
    <property type="match status" value="1"/>
</dbReference>
<dbReference type="HAMAP" id="MF_00480_B">
    <property type="entry name" value="Ribosomal_uS7_B"/>
    <property type="match status" value="1"/>
</dbReference>
<dbReference type="InterPro" id="IPR000235">
    <property type="entry name" value="Ribosomal_uS7"/>
</dbReference>
<dbReference type="InterPro" id="IPR005717">
    <property type="entry name" value="Ribosomal_uS7_bac/org-type"/>
</dbReference>
<dbReference type="InterPro" id="IPR020606">
    <property type="entry name" value="Ribosomal_uS7_CS"/>
</dbReference>
<dbReference type="InterPro" id="IPR023798">
    <property type="entry name" value="Ribosomal_uS7_dom"/>
</dbReference>
<dbReference type="InterPro" id="IPR036823">
    <property type="entry name" value="Ribosomal_uS7_dom_sf"/>
</dbReference>
<dbReference type="NCBIfam" id="TIGR01029">
    <property type="entry name" value="rpsG_bact"/>
    <property type="match status" value="1"/>
</dbReference>
<dbReference type="PANTHER" id="PTHR11205">
    <property type="entry name" value="RIBOSOMAL PROTEIN S7"/>
    <property type="match status" value="1"/>
</dbReference>
<dbReference type="Pfam" id="PF00177">
    <property type="entry name" value="Ribosomal_S7"/>
    <property type="match status" value="1"/>
</dbReference>
<dbReference type="PIRSF" id="PIRSF002122">
    <property type="entry name" value="RPS7p_RPS7a_RPS5e_RPS7o"/>
    <property type="match status" value="1"/>
</dbReference>
<dbReference type="SUPFAM" id="SSF47973">
    <property type="entry name" value="Ribosomal protein S7"/>
    <property type="match status" value="1"/>
</dbReference>
<dbReference type="PROSITE" id="PS00052">
    <property type="entry name" value="RIBOSOMAL_S7"/>
    <property type="match status" value="1"/>
</dbReference>
<keyword id="KW-0687">Ribonucleoprotein</keyword>
<keyword id="KW-0689">Ribosomal protein</keyword>
<keyword id="KW-0694">RNA-binding</keyword>
<keyword id="KW-0699">rRNA-binding</keyword>
<keyword id="KW-0820">tRNA-binding</keyword>
<evidence type="ECO:0000255" key="1">
    <source>
        <dbReference type="HAMAP-Rule" id="MF_00480"/>
    </source>
</evidence>
<evidence type="ECO:0000305" key="2"/>
<reference key="1">
    <citation type="journal article" date="2005" name="Proc. Natl. Acad. Sci. U.S.A.">
        <title>The psychrophilic lifestyle as revealed by the genome sequence of Colwellia psychrerythraea 34H through genomic and proteomic analyses.</title>
        <authorList>
            <person name="Methe B.A."/>
            <person name="Nelson K.E."/>
            <person name="Deming J.W."/>
            <person name="Momen B."/>
            <person name="Melamud E."/>
            <person name="Zhang X."/>
            <person name="Moult J."/>
            <person name="Madupu R."/>
            <person name="Nelson W.C."/>
            <person name="Dodson R.J."/>
            <person name="Brinkac L.M."/>
            <person name="Daugherty S.C."/>
            <person name="Durkin A.S."/>
            <person name="DeBoy R.T."/>
            <person name="Kolonay J.F."/>
            <person name="Sullivan S.A."/>
            <person name="Zhou L."/>
            <person name="Davidsen T.M."/>
            <person name="Wu M."/>
            <person name="Huston A.L."/>
            <person name="Lewis M."/>
            <person name="Weaver B."/>
            <person name="Weidman J.F."/>
            <person name="Khouri H."/>
            <person name="Utterback T.R."/>
            <person name="Feldblyum T.V."/>
            <person name="Fraser C.M."/>
        </authorList>
    </citation>
    <scope>NUCLEOTIDE SEQUENCE [LARGE SCALE GENOMIC DNA]</scope>
    <source>
        <strain>34H / ATCC BAA-681</strain>
    </source>
</reference>
<proteinExistence type="inferred from homology"/>
<protein>
    <recommendedName>
        <fullName evidence="1">Small ribosomal subunit protein uS7</fullName>
    </recommendedName>
    <alternativeName>
        <fullName evidence="2">30S ribosomal protein S7</fullName>
    </alternativeName>
</protein>
<gene>
    <name evidence="1" type="primary">rpsG</name>
    <name type="ordered locus">CPS_4766</name>
</gene>
<comment type="function">
    <text evidence="1">One of the primary rRNA binding proteins, it binds directly to 16S rRNA where it nucleates assembly of the head domain of the 30S subunit. Is located at the subunit interface close to the decoding center, probably blocks exit of the E-site tRNA.</text>
</comment>
<comment type="subunit">
    <text evidence="1">Part of the 30S ribosomal subunit. Contacts proteins S9 and S11.</text>
</comment>
<comment type="similarity">
    <text evidence="1">Belongs to the universal ribosomal protein uS7 family.</text>
</comment>
<organism>
    <name type="scientific">Colwellia psychrerythraea (strain 34H / ATCC BAA-681)</name>
    <name type="common">Vibrio psychroerythus</name>
    <dbReference type="NCBI Taxonomy" id="167879"/>
    <lineage>
        <taxon>Bacteria</taxon>
        <taxon>Pseudomonadati</taxon>
        <taxon>Pseudomonadota</taxon>
        <taxon>Gammaproteobacteria</taxon>
        <taxon>Alteromonadales</taxon>
        <taxon>Colwelliaceae</taxon>
        <taxon>Colwellia</taxon>
    </lineage>
</organism>
<sequence length="156" mass="17870">MPRRRVVGQRKILPDPKFHNELLAKFINILMVDGKKSTAEKIVYGALDILAQKSEKDQLELFEEALDNIRPSVEVKSRRVGGSTYQVPVEVRPVRRNALAMRWLVEAARKRGEKSMAQRLANEMLDASDSKGSAVKKREDVHRMADANKAFAHYRW</sequence>